<name>NUOB_FRATF</name>
<organism>
    <name type="scientific">Francisella tularensis subsp. holarctica (strain FTNF002-00 / FTA)</name>
    <dbReference type="NCBI Taxonomy" id="458234"/>
    <lineage>
        <taxon>Bacteria</taxon>
        <taxon>Pseudomonadati</taxon>
        <taxon>Pseudomonadota</taxon>
        <taxon>Gammaproteobacteria</taxon>
        <taxon>Thiotrichales</taxon>
        <taxon>Francisellaceae</taxon>
        <taxon>Francisella</taxon>
    </lineage>
</organism>
<gene>
    <name evidence="1" type="primary">nuoB</name>
    <name type="ordered locus">FTA_1937</name>
</gene>
<comment type="function">
    <text evidence="1">NDH-1 shuttles electrons from NADH, via FMN and iron-sulfur (Fe-S) centers, to quinones in the respiratory chain. The immediate electron acceptor for the enzyme in this species is believed to be ubiquinone. Couples the redox reaction to proton translocation (for every two electrons transferred, four hydrogen ions are translocated across the cytoplasmic membrane), and thus conserves the redox energy in a proton gradient.</text>
</comment>
<comment type="catalytic activity">
    <reaction evidence="1">
        <text>a quinone + NADH + 5 H(+)(in) = a quinol + NAD(+) + 4 H(+)(out)</text>
        <dbReference type="Rhea" id="RHEA:57888"/>
        <dbReference type="ChEBI" id="CHEBI:15378"/>
        <dbReference type="ChEBI" id="CHEBI:24646"/>
        <dbReference type="ChEBI" id="CHEBI:57540"/>
        <dbReference type="ChEBI" id="CHEBI:57945"/>
        <dbReference type="ChEBI" id="CHEBI:132124"/>
    </reaction>
</comment>
<comment type="cofactor">
    <cofactor evidence="1">
        <name>[4Fe-4S] cluster</name>
        <dbReference type="ChEBI" id="CHEBI:49883"/>
    </cofactor>
    <text evidence="1">Binds 1 [4Fe-4S] cluster.</text>
</comment>
<comment type="subunit">
    <text evidence="1">NDH-1 is composed of 14 different subunits. Subunits NuoB, C, D, E, F, and G constitute the peripheral sector of the complex.</text>
</comment>
<comment type="subcellular location">
    <subcellularLocation>
        <location evidence="1">Cell inner membrane</location>
        <topology evidence="1">Peripheral membrane protein</topology>
        <orientation evidence="1">Cytoplasmic side</orientation>
    </subcellularLocation>
</comment>
<comment type="similarity">
    <text evidence="1">Belongs to the complex I 20 kDa subunit family.</text>
</comment>
<sequence>MGIGNENKGFITASADALINWVRTGSLWPVTTGLACCAVEMMHAGAARYDLDRFGIVFRPSPRQSDVLIVAGTLCNKMAPALRQVYDQMPDPKWVISMGSCANGGGYYHYSYSVVRGCDRIVPVDIYVPGCPPTAEALVYGIIQLQNKIIRKDTIARK</sequence>
<keyword id="KW-0004">4Fe-4S</keyword>
<keyword id="KW-0997">Cell inner membrane</keyword>
<keyword id="KW-1003">Cell membrane</keyword>
<keyword id="KW-0408">Iron</keyword>
<keyword id="KW-0411">Iron-sulfur</keyword>
<keyword id="KW-0472">Membrane</keyword>
<keyword id="KW-0479">Metal-binding</keyword>
<keyword id="KW-0520">NAD</keyword>
<keyword id="KW-0874">Quinone</keyword>
<keyword id="KW-1278">Translocase</keyword>
<keyword id="KW-0813">Transport</keyword>
<keyword id="KW-0830">Ubiquinone</keyword>
<reference key="1">
    <citation type="journal article" date="2009" name="PLoS ONE">
        <title>Complete genome sequence of Francisella tularensis subspecies holarctica FTNF002-00.</title>
        <authorList>
            <person name="Barabote R.D."/>
            <person name="Xie G."/>
            <person name="Brettin T.S."/>
            <person name="Hinrichs S.H."/>
            <person name="Fey P.D."/>
            <person name="Jay J.J."/>
            <person name="Engle J.L."/>
            <person name="Godbole S.D."/>
            <person name="Noronha J.M."/>
            <person name="Scheuermann R.H."/>
            <person name="Zhou L.W."/>
            <person name="Lion C."/>
            <person name="Dempsey M.P."/>
        </authorList>
    </citation>
    <scope>NUCLEOTIDE SEQUENCE [LARGE SCALE GENOMIC DNA]</scope>
    <source>
        <strain>FTNF002-00 / FTA</strain>
    </source>
</reference>
<feature type="chain" id="PRO_0000376227" description="NADH-quinone oxidoreductase subunit B">
    <location>
        <begin position="1"/>
        <end position="158"/>
    </location>
</feature>
<feature type="binding site" evidence="1">
    <location>
        <position position="36"/>
    </location>
    <ligand>
        <name>[4Fe-4S] cluster</name>
        <dbReference type="ChEBI" id="CHEBI:49883"/>
    </ligand>
</feature>
<feature type="binding site" evidence="1">
    <location>
        <position position="37"/>
    </location>
    <ligand>
        <name>[4Fe-4S] cluster</name>
        <dbReference type="ChEBI" id="CHEBI:49883"/>
    </ligand>
</feature>
<feature type="binding site" evidence="1">
    <location>
        <position position="101"/>
    </location>
    <ligand>
        <name>[4Fe-4S] cluster</name>
        <dbReference type="ChEBI" id="CHEBI:49883"/>
    </ligand>
</feature>
<feature type="binding site" evidence="1">
    <location>
        <position position="131"/>
    </location>
    <ligand>
        <name>[4Fe-4S] cluster</name>
        <dbReference type="ChEBI" id="CHEBI:49883"/>
    </ligand>
</feature>
<protein>
    <recommendedName>
        <fullName evidence="1">NADH-quinone oxidoreductase subunit B</fullName>
        <ecNumber evidence="1">7.1.1.-</ecNumber>
    </recommendedName>
    <alternativeName>
        <fullName evidence="1">NADH dehydrogenase I subunit B</fullName>
    </alternativeName>
    <alternativeName>
        <fullName evidence="1">NDH-1 subunit B</fullName>
    </alternativeName>
</protein>
<accession>A7NEK9</accession>
<evidence type="ECO:0000255" key="1">
    <source>
        <dbReference type="HAMAP-Rule" id="MF_01356"/>
    </source>
</evidence>
<proteinExistence type="inferred from homology"/>
<dbReference type="EC" id="7.1.1.-" evidence="1"/>
<dbReference type="EMBL" id="CP000803">
    <property type="protein sequence ID" value="ABU62412.1"/>
    <property type="molecule type" value="Genomic_DNA"/>
</dbReference>
<dbReference type="RefSeq" id="WP_003017394.1">
    <property type="nucleotide sequence ID" value="NC_009749.1"/>
</dbReference>
<dbReference type="SMR" id="A7NEK9"/>
<dbReference type="KEGG" id="fta:FTA_1937"/>
<dbReference type="HOGENOM" id="CLU_055737_7_3_6"/>
<dbReference type="GO" id="GO:0005886">
    <property type="term" value="C:plasma membrane"/>
    <property type="evidence" value="ECO:0007669"/>
    <property type="project" value="UniProtKB-SubCell"/>
</dbReference>
<dbReference type="GO" id="GO:0045271">
    <property type="term" value="C:respiratory chain complex I"/>
    <property type="evidence" value="ECO:0007669"/>
    <property type="project" value="TreeGrafter"/>
</dbReference>
<dbReference type="GO" id="GO:0051539">
    <property type="term" value="F:4 iron, 4 sulfur cluster binding"/>
    <property type="evidence" value="ECO:0007669"/>
    <property type="project" value="UniProtKB-KW"/>
</dbReference>
<dbReference type="GO" id="GO:0005506">
    <property type="term" value="F:iron ion binding"/>
    <property type="evidence" value="ECO:0007669"/>
    <property type="project" value="UniProtKB-UniRule"/>
</dbReference>
<dbReference type="GO" id="GO:0008137">
    <property type="term" value="F:NADH dehydrogenase (ubiquinone) activity"/>
    <property type="evidence" value="ECO:0007669"/>
    <property type="project" value="InterPro"/>
</dbReference>
<dbReference type="GO" id="GO:0050136">
    <property type="term" value="F:NADH:ubiquinone reductase (non-electrogenic) activity"/>
    <property type="evidence" value="ECO:0007669"/>
    <property type="project" value="UniProtKB-UniRule"/>
</dbReference>
<dbReference type="GO" id="GO:0048038">
    <property type="term" value="F:quinone binding"/>
    <property type="evidence" value="ECO:0007669"/>
    <property type="project" value="UniProtKB-KW"/>
</dbReference>
<dbReference type="GO" id="GO:0009060">
    <property type="term" value="P:aerobic respiration"/>
    <property type="evidence" value="ECO:0007669"/>
    <property type="project" value="TreeGrafter"/>
</dbReference>
<dbReference type="GO" id="GO:0015990">
    <property type="term" value="P:electron transport coupled proton transport"/>
    <property type="evidence" value="ECO:0007669"/>
    <property type="project" value="TreeGrafter"/>
</dbReference>
<dbReference type="FunFam" id="3.40.50.12280:FF:000001">
    <property type="entry name" value="NADH-quinone oxidoreductase subunit B 2"/>
    <property type="match status" value="1"/>
</dbReference>
<dbReference type="Gene3D" id="3.40.50.12280">
    <property type="match status" value="1"/>
</dbReference>
<dbReference type="HAMAP" id="MF_01356">
    <property type="entry name" value="NDH1_NuoB"/>
    <property type="match status" value="1"/>
</dbReference>
<dbReference type="InterPro" id="IPR006137">
    <property type="entry name" value="NADH_UbQ_OxRdtase-like_20kDa"/>
</dbReference>
<dbReference type="InterPro" id="IPR006138">
    <property type="entry name" value="NADH_UQ_OxRdtase_20Kd_su"/>
</dbReference>
<dbReference type="NCBIfam" id="TIGR01957">
    <property type="entry name" value="nuoB_fam"/>
    <property type="match status" value="1"/>
</dbReference>
<dbReference type="NCBIfam" id="NF005012">
    <property type="entry name" value="PRK06411.1"/>
    <property type="match status" value="1"/>
</dbReference>
<dbReference type="PANTHER" id="PTHR11995">
    <property type="entry name" value="NADH DEHYDROGENASE"/>
    <property type="match status" value="1"/>
</dbReference>
<dbReference type="PANTHER" id="PTHR11995:SF14">
    <property type="entry name" value="NADH DEHYDROGENASE [UBIQUINONE] IRON-SULFUR PROTEIN 7, MITOCHONDRIAL"/>
    <property type="match status" value="1"/>
</dbReference>
<dbReference type="Pfam" id="PF01058">
    <property type="entry name" value="Oxidored_q6"/>
    <property type="match status" value="1"/>
</dbReference>
<dbReference type="SUPFAM" id="SSF56770">
    <property type="entry name" value="HydA/Nqo6-like"/>
    <property type="match status" value="1"/>
</dbReference>
<dbReference type="PROSITE" id="PS01150">
    <property type="entry name" value="COMPLEX1_20K"/>
    <property type="match status" value="1"/>
</dbReference>